<name>UVRB_THET8</name>
<proteinExistence type="evidence at protein level"/>
<reference key="1">
    <citation type="journal article" date="1996" name="J. Biol. Chem.">
        <title>ATPase activity of UvrB protein form Thermus thermophilus HB8 and its interaction with DNA.</title>
        <authorList>
            <person name="Kato R."/>
            <person name="Yamamoto N."/>
            <person name="Kito K."/>
            <person name="Kuramitsu S."/>
        </authorList>
    </citation>
    <scope>NUCLEOTIDE SEQUENCE [GENOMIC DNA]</scope>
    <scope>PROTEIN SEQUENCE OF 3-12</scope>
    <scope>ATPASE ACTIVITY</scope>
</reference>
<reference key="2">
    <citation type="submission" date="2004-11" db="EMBL/GenBank/DDBJ databases">
        <title>Complete genome sequence of Thermus thermophilus HB8.</title>
        <authorList>
            <person name="Masui R."/>
            <person name="Kurokawa K."/>
            <person name="Nakagawa N."/>
            <person name="Tokunaga F."/>
            <person name="Koyama Y."/>
            <person name="Shibata T."/>
            <person name="Oshima T."/>
            <person name="Yokoyama S."/>
            <person name="Yasunaga T."/>
            <person name="Kuramitsu S."/>
        </authorList>
    </citation>
    <scope>NUCLEOTIDE SEQUENCE [LARGE SCALE GENOMIC DNA]</scope>
    <source>
        <strain>ATCC 27634 / DSM 579 / HB8</strain>
    </source>
</reference>
<reference key="3">
    <citation type="journal article" date="1999" name="J. Biochem.">
        <title>Crystal structure of Thermus thermophilus HB8 UvrB protein, a key enzyme of nucleotide excision repair.</title>
        <authorList>
            <person name="Nakagawa N."/>
            <person name="Sugahara M."/>
            <person name="Masui R."/>
            <person name="Kato R."/>
            <person name="Fukuyama K."/>
            <person name="Kuramitsu S."/>
        </authorList>
    </citation>
    <scope>X-RAY CRYSTALLOGRAPHY (1.9 ANGSTROMS)</scope>
</reference>
<reference key="4">
    <citation type="journal article" date="1999" name="Proc. Natl. Acad. Sci. U.S.A.">
        <title>Crystal structure of the DNA nucleotide excision repair enzyme UvrB from Thermus thermophilus.</title>
        <authorList>
            <person name="Machius M."/>
            <person name="Henry L."/>
            <person name="Palnitkar M."/>
            <person name="Deisenhofer J."/>
        </authorList>
    </citation>
    <scope>X-RAY CRYSTALLOGRAPHY (1.83 ANGSTROMS)</scope>
</reference>
<gene>
    <name type="primary">uvrB</name>
    <name type="ordered locus">TTHA1892</name>
</gene>
<feature type="chain" id="PRO_0000138440" description="UvrABC system protein B">
    <location>
        <begin position="1"/>
        <end position="665"/>
    </location>
</feature>
<feature type="domain" description="Helicase ATP-binding">
    <location>
        <begin position="23"/>
        <end position="408"/>
    </location>
</feature>
<feature type="domain" description="Helicase C-terminal">
    <location>
        <begin position="425"/>
        <end position="591"/>
    </location>
</feature>
<feature type="domain" description="UVR">
    <location>
        <begin position="611"/>
        <end position="646"/>
    </location>
</feature>
<feature type="short sequence motif" description="Beta-hairpin">
    <location>
        <begin position="89"/>
        <end position="112"/>
    </location>
</feature>
<feature type="binding site" evidence="2">
    <location>
        <begin position="36"/>
        <end position="43"/>
    </location>
    <ligand>
        <name>ATP</name>
        <dbReference type="ChEBI" id="CHEBI:30616"/>
    </ligand>
</feature>
<feature type="sequence conflict" description="In Ref. 1; BAA08653." evidence="3" ref="1">
    <original>E</original>
    <variation>K</variation>
    <location>
        <position position="478"/>
    </location>
</feature>
<feature type="helix" evidence="4">
    <location>
        <begin position="14"/>
        <end position="26"/>
    </location>
</feature>
<feature type="strand" evidence="4">
    <location>
        <begin position="30"/>
        <end position="36"/>
    </location>
</feature>
<feature type="helix" evidence="4">
    <location>
        <begin position="42"/>
        <end position="53"/>
    </location>
</feature>
<feature type="strand" evidence="4">
    <location>
        <begin position="57"/>
        <end position="63"/>
    </location>
</feature>
<feature type="helix" evidence="4">
    <location>
        <begin position="64"/>
        <end position="77"/>
    </location>
</feature>
<feature type="strand" evidence="4">
    <location>
        <begin position="81"/>
        <end position="85"/>
    </location>
</feature>
<feature type="helix" evidence="4">
    <location>
        <begin position="89"/>
        <end position="91"/>
    </location>
</feature>
<feature type="strand" evidence="4">
    <location>
        <begin position="97"/>
        <end position="99"/>
    </location>
</feature>
<feature type="helix" evidence="4">
    <location>
        <begin position="100"/>
        <end position="102"/>
    </location>
</feature>
<feature type="strand" evidence="4">
    <location>
        <begin position="104"/>
        <end position="106"/>
    </location>
</feature>
<feature type="helix" evidence="4">
    <location>
        <begin position="115"/>
        <end position="129"/>
    </location>
</feature>
<feature type="strand" evidence="4">
    <location>
        <begin position="133"/>
        <end position="138"/>
    </location>
</feature>
<feature type="helix" evidence="4">
    <location>
        <begin position="139"/>
        <end position="141"/>
    </location>
</feature>
<feature type="helix" evidence="4">
    <location>
        <begin position="148"/>
        <end position="153"/>
    </location>
</feature>
<feature type="strand" evidence="5">
    <location>
        <begin position="156"/>
        <end position="158"/>
    </location>
</feature>
<feature type="turn" evidence="5">
    <location>
        <begin position="172"/>
        <end position="177"/>
    </location>
</feature>
<feature type="strand" evidence="5">
    <location>
        <begin position="182"/>
        <end position="184"/>
    </location>
</feature>
<feature type="strand" evidence="5">
    <location>
        <begin position="193"/>
        <end position="195"/>
    </location>
</feature>
<feature type="strand" evidence="5">
    <location>
        <begin position="197"/>
        <end position="199"/>
    </location>
</feature>
<feature type="strand" evidence="5">
    <location>
        <begin position="208"/>
        <end position="210"/>
    </location>
</feature>
<feature type="strand" evidence="6">
    <location>
        <begin position="216"/>
        <end position="223"/>
    </location>
</feature>
<feature type="turn" evidence="6">
    <location>
        <begin position="225"/>
        <end position="227"/>
    </location>
</feature>
<feature type="strand" evidence="6">
    <location>
        <begin position="230"/>
        <end position="233"/>
    </location>
</feature>
<feature type="strand" evidence="5">
    <location>
        <begin position="237"/>
        <end position="239"/>
    </location>
</feature>
<feature type="helix" evidence="4">
    <location>
        <begin position="251"/>
        <end position="271"/>
    </location>
</feature>
<feature type="helix" evidence="4">
    <location>
        <begin position="275"/>
        <end position="295"/>
    </location>
</feature>
<feature type="helix" evidence="4">
    <location>
        <begin position="301"/>
        <end position="304"/>
    </location>
</feature>
<feature type="helix" evidence="4">
    <location>
        <begin position="305"/>
        <end position="309"/>
    </location>
</feature>
<feature type="helix" evidence="4">
    <location>
        <begin position="320"/>
        <end position="323"/>
    </location>
</feature>
<feature type="strand" evidence="4">
    <location>
        <begin position="329"/>
        <end position="333"/>
    </location>
</feature>
<feature type="helix" evidence="4">
    <location>
        <begin position="335"/>
        <end position="358"/>
    </location>
</feature>
<feature type="helix" evidence="4">
    <location>
        <begin position="364"/>
        <end position="368"/>
    </location>
</feature>
<feature type="helix" evidence="4">
    <location>
        <begin position="374"/>
        <end position="379"/>
    </location>
</feature>
<feature type="strand" evidence="4">
    <location>
        <begin position="382"/>
        <end position="390"/>
    </location>
</feature>
<feature type="helix" evidence="4">
    <location>
        <begin position="393"/>
        <end position="398"/>
    </location>
</feature>
<feature type="strand" evidence="4">
    <location>
        <begin position="400"/>
        <end position="405"/>
    </location>
</feature>
<feature type="strand" evidence="4">
    <location>
        <begin position="416"/>
        <end position="420"/>
    </location>
</feature>
<feature type="helix" evidence="4">
    <location>
        <begin position="425"/>
        <end position="438"/>
    </location>
</feature>
<feature type="strand" evidence="4">
    <location>
        <begin position="442"/>
        <end position="446"/>
    </location>
</feature>
<feature type="helix" evidence="4">
    <location>
        <begin position="450"/>
        <end position="462"/>
    </location>
</feature>
<feature type="strand" evidence="4">
    <location>
        <begin position="467"/>
        <end position="470"/>
    </location>
</feature>
<feature type="helix" evidence="4">
    <location>
        <begin position="476"/>
        <end position="487"/>
    </location>
</feature>
<feature type="strand" evidence="4">
    <location>
        <begin position="492"/>
        <end position="497"/>
    </location>
</feature>
<feature type="strand" evidence="4">
    <location>
        <begin position="509"/>
        <end position="514"/>
    </location>
</feature>
<feature type="turn" evidence="4">
    <location>
        <begin position="515"/>
        <end position="518"/>
    </location>
</feature>
<feature type="helix" evidence="4">
    <location>
        <begin position="522"/>
        <end position="524"/>
    </location>
</feature>
<feature type="helix" evidence="4">
    <location>
        <begin position="526"/>
        <end position="533"/>
    </location>
</feature>
<feature type="helix" evidence="4">
    <location>
        <begin position="534"/>
        <end position="536"/>
    </location>
</feature>
<feature type="strand" evidence="4">
    <location>
        <begin position="543"/>
        <end position="547"/>
    </location>
</feature>
<feature type="helix" evidence="4">
    <location>
        <begin position="553"/>
        <end position="576"/>
    </location>
</feature>
<sequence length="665" mass="76160">MTFRYRGPSPKGDQPKAIAGLVEALRDGERFVTLLGATGTGKTVTMAKVIEALGRPALVLAPNKILAAQLAAEFRELFPENAVEYFISYYDYYQPEAYVPGKDLYIEKDASINPEIERLRHSTTRSLLTRRDVIVVASVSAIYGLGDPREYRARNLVVERGKPYPREVLLERLLELGYQRNDIDLSPGRFRAKGEVLEIFPAYETEPIRVELFGDEVERISQVHPVTGERLRELPGFVLFPATHYLSPEGLEEILKEIEKELWERVRYFEERGEVLYAQRLKERTLYDLEMLRVMGTCPGVENYARYFTGKAPGEPPYTLLDYFPEDFLVFLDESHVTVPQLQGMYRGDYARKKTLVDYGFRLPSALDNRPLRFEEFLERVSQVVFVSATPGPFELAHSGRVVEQIIRPTGLLDPLVRVKPTENQILDLMEGIRERAARGERTLVTVLTVRMAEELTSFLVEHGIRARYLHHELDAFERQALIRDLRLGHYDCLVGINLLREGLDIPEVSLVAILDADKEGFLRSERSLIQTIGRAARNARGEVWLYADRVSEAMQRAIEETNRRRALQEAYNLEHGITPETVRKEVRAVIRPEGYEEAPLEADLSGEDLRERIAELELAMWQAAEALDFERAARLRDEIRALEARLQGVRAPEPVPGGRKRKRR</sequence>
<accession>Q56243</accession>
<accession>Q5SH38</accession>
<evidence type="ECO:0000250" key="1"/>
<evidence type="ECO:0000255" key="2"/>
<evidence type="ECO:0000305" key="3"/>
<evidence type="ECO:0007829" key="4">
    <source>
        <dbReference type="PDB" id="1C4O"/>
    </source>
</evidence>
<evidence type="ECO:0007829" key="5">
    <source>
        <dbReference type="PDB" id="1D2M"/>
    </source>
</evidence>
<evidence type="ECO:0007829" key="6">
    <source>
        <dbReference type="PDB" id="7EGT"/>
    </source>
</evidence>
<protein>
    <recommendedName>
        <fullName>UvrABC system protein B</fullName>
        <shortName>Protein UvrB</shortName>
    </recommendedName>
    <alternativeName>
        <fullName>Excinuclease ABC subunit B</fullName>
    </alternativeName>
</protein>
<dbReference type="EMBL" id="D49912">
    <property type="protein sequence ID" value="BAA08653.1"/>
    <property type="molecule type" value="Genomic_DNA"/>
</dbReference>
<dbReference type="EMBL" id="AP008226">
    <property type="protein sequence ID" value="BAD71715.1"/>
    <property type="molecule type" value="Genomic_DNA"/>
</dbReference>
<dbReference type="RefSeq" id="WP_011228991.1">
    <property type="nucleotide sequence ID" value="NC_006461.1"/>
</dbReference>
<dbReference type="RefSeq" id="YP_145158.1">
    <property type="nucleotide sequence ID" value="NC_006461.1"/>
</dbReference>
<dbReference type="PDB" id="1C4O">
    <property type="method" value="X-ray"/>
    <property type="resolution" value="1.50 A"/>
    <property type="chains" value="A=2-665"/>
</dbReference>
<dbReference type="PDB" id="1D2M">
    <property type="method" value="X-ray"/>
    <property type="resolution" value="1.90 A"/>
    <property type="chains" value="A=1-665"/>
</dbReference>
<dbReference type="PDB" id="7EGT">
    <property type="method" value="X-ray"/>
    <property type="resolution" value="2.58 A"/>
    <property type="chains" value="A/C=1-408"/>
</dbReference>
<dbReference type="PDBsum" id="1C4O"/>
<dbReference type="PDBsum" id="1D2M"/>
<dbReference type="PDBsum" id="7EGT"/>
<dbReference type="SMR" id="Q56243"/>
<dbReference type="EnsemblBacteria" id="BAD71715">
    <property type="protein sequence ID" value="BAD71715"/>
    <property type="gene ID" value="BAD71715"/>
</dbReference>
<dbReference type="GeneID" id="3168014"/>
<dbReference type="KEGG" id="ttj:TTHA1892"/>
<dbReference type="PATRIC" id="fig|300852.9.peg.1859"/>
<dbReference type="eggNOG" id="COG0556">
    <property type="taxonomic scope" value="Bacteria"/>
</dbReference>
<dbReference type="HOGENOM" id="CLU_009621_2_1_0"/>
<dbReference type="PhylomeDB" id="Q56243"/>
<dbReference type="EvolutionaryTrace" id="Q56243"/>
<dbReference type="Proteomes" id="UP000000532">
    <property type="component" value="Chromosome"/>
</dbReference>
<dbReference type="GO" id="GO:0005737">
    <property type="term" value="C:cytoplasm"/>
    <property type="evidence" value="ECO:0007669"/>
    <property type="project" value="UniProtKB-SubCell"/>
</dbReference>
<dbReference type="GO" id="GO:0009380">
    <property type="term" value="C:excinuclease repair complex"/>
    <property type="evidence" value="ECO:0007669"/>
    <property type="project" value="InterPro"/>
</dbReference>
<dbReference type="GO" id="GO:0005524">
    <property type="term" value="F:ATP binding"/>
    <property type="evidence" value="ECO:0007669"/>
    <property type="project" value="UniProtKB-UniRule"/>
</dbReference>
<dbReference type="GO" id="GO:0016887">
    <property type="term" value="F:ATP hydrolysis activity"/>
    <property type="evidence" value="ECO:0007669"/>
    <property type="project" value="InterPro"/>
</dbReference>
<dbReference type="GO" id="GO:0003677">
    <property type="term" value="F:DNA binding"/>
    <property type="evidence" value="ECO:0007669"/>
    <property type="project" value="UniProtKB-UniRule"/>
</dbReference>
<dbReference type="GO" id="GO:0009381">
    <property type="term" value="F:excinuclease ABC activity"/>
    <property type="evidence" value="ECO:0007669"/>
    <property type="project" value="UniProtKB-UniRule"/>
</dbReference>
<dbReference type="GO" id="GO:0006289">
    <property type="term" value="P:nucleotide-excision repair"/>
    <property type="evidence" value="ECO:0007669"/>
    <property type="project" value="UniProtKB-UniRule"/>
</dbReference>
<dbReference type="GO" id="GO:0009432">
    <property type="term" value="P:SOS response"/>
    <property type="evidence" value="ECO:0007669"/>
    <property type="project" value="UniProtKB-UniRule"/>
</dbReference>
<dbReference type="CDD" id="cd17916">
    <property type="entry name" value="DEXHc_UvrB"/>
    <property type="match status" value="1"/>
</dbReference>
<dbReference type="CDD" id="cd18790">
    <property type="entry name" value="SF2_C_UvrB"/>
    <property type="match status" value="1"/>
</dbReference>
<dbReference type="Gene3D" id="3.40.50.300">
    <property type="entry name" value="P-loop containing nucleotide triphosphate hydrolases"/>
    <property type="match status" value="3"/>
</dbReference>
<dbReference type="Gene3D" id="4.10.860.10">
    <property type="entry name" value="UVR domain"/>
    <property type="match status" value="1"/>
</dbReference>
<dbReference type="HAMAP" id="MF_00204">
    <property type="entry name" value="UvrB"/>
    <property type="match status" value="1"/>
</dbReference>
<dbReference type="InterPro" id="IPR006935">
    <property type="entry name" value="Helicase/UvrB_N"/>
</dbReference>
<dbReference type="InterPro" id="IPR014001">
    <property type="entry name" value="Helicase_ATP-bd"/>
</dbReference>
<dbReference type="InterPro" id="IPR001650">
    <property type="entry name" value="Helicase_C-like"/>
</dbReference>
<dbReference type="InterPro" id="IPR027417">
    <property type="entry name" value="P-loop_NTPase"/>
</dbReference>
<dbReference type="InterPro" id="IPR001943">
    <property type="entry name" value="UVR_dom"/>
</dbReference>
<dbReference type="InterPro" id="IPR036876">
    <property type="entry name" value="UVR_dom_sf"/>
</dbReference>
<dbReference type="InterPro" id="IPR004807">
    <property type="entry name" value="UvrB"/>
</dbReference>
<dbReference type="InterPro" id="IPR041471">
    <property type="entry name" value="UvrB_inter"/>
</dbReference>
<dbReference type="InterPro" id="IPR024759">
    <property type="entry name" value="UvrB_YAD/RRR_dom"/>
</dbReference>
<dbReference type="NCBIfam" id="NF003673">
    <property type="entry name" value="PRK05298.1"/>
    <property type="match status" value="1"/>
</dbReference>
<dbReference type="NCBIfam" id="TIGR00631">
    <property type="entry name" value="uvrb"/>
    <property type="match status" value="1"/>
</dbReference>
<dbReference type="PANTHER" id="PTHR24029">
    <property type="entry name" value="UVRABC SYSTEM PROTEIN B"/>
    <property type="match status" value="1"/>
</dbReference>
<dbReference type="PANTHER" id="PTHR24029:SF0">
    <property type="entry name" value="UVRABC SYSTEM PROTEIN B"/>
    <property type="match status" value="1"/>
</dbReference>
<dbReference type="Pfam" id="PF00271">
    <property type="entry name" value="Helicase_C"/>
    <property type="match status" value="1"/>
</dbReference>
<dbReference type="Pfam" id="PF04851">
    <property type="entry name" value="ResIII"/>
    <property type="match status" value="1"/>
</dbReference>
<dbReference type="Pfam" id="PF02151">
    <property type="entry name" value="UVR"/>
    <property type="match status" value="1"/>
</dbReference>
<dbReference type="Pfam" id="PF12344">
    <property type="entry name" value="UvrB"/>
    <property type="match status" value="1"/>
</dbReference>
<dbReference type="Pfam" id="PF17757">
    <property type="entry name" value="UvrB_inter"/>
    <property type="match status" value="1"/>
</dbReference>
<dbReference type="SMART" id="SM00487">
    <property type="entry name" value="DEXDc"/>
    <property type="match status" value="1"/>
</dbReference>
<dbReference type="SMART" id="SM00490">
    <property type="entry name" value="HELICc"/>
    <property type="match status" value="1"/>
</dbReference>
<dbReference type="SUPFAM" id="SSF46600">
    <property type="entry name" value="C-terminal UvrC-binding domain of UvrB"/>
    <property type="match status" value="1"/>
</dbReference>
<dbReference type="SUPFAM" id="SSF52540">
    <property type="entry name" value="P-loop containing nucleoside triphosphate hydrolases"/>
    <property type="match status" value="2"/>
</dbReference>
<dbReference type="PROSITE" id="PS51192">
    <property type="entry name" value="HELICASE_ATP_BIND_1"/>
    <property type="match status" value="1"/>
</dbReference>
<dbReference type="PROSITE" id="PS51194">
    <property type="entry name" value="HELICASE_CTER"/>
    <property type="match status" value="1"/>
</dbReference>
<dbReference type="PROSITE" id="PS50151">
    <property type="entry name" value="UVR"/>
    <property type="match status" value="1"/>
</dbReference>
<organism>
    <name type="scientific">Thermus thermophilus (strain ATCC 27634 / DSM 579 / HB8)</name>
    <dbReference type="NCBI Taxonomy" id="300852"/>
    <lineage>
        <taxon>Bacteria</taxon>
        <taxon>Thermotogati</taxon>
        <taxon>Deinococcota</taxon>
        <taxon>Deinococci</taxon>
        <taxon>Thermales</taxon>
        <taxon>Thermaceae</taxon>
        <taxon>Thermus</taxon>
    </lineage>
</organism>
<comment type="function">
    <text evidence="1">The UvrABC repair system catalyzes the recognition and processing of DNA lesions. A damage recognition complex composed of 2 UvrA and 2 UvrB subunits scans DNA for abnormalities. Upon binding of the UvrA(2)B(2) complex to a putative damaged site, the DNA wraps around one UvrB monomer. DNA wrap is dependent on ATP binding by UvrB and probably causes local melting of the DNA helix, facilitating insertion of UvrB beta-hairpin between the DNA strands. Then UvrB probes one DNA strand for the presence of a lesion. If a lesion is found the UvrA subunits dissociate and the UvrB-DNA preincision complex is formed. This complex is subsequently bound by UvrC and the second UvrB is released. If no lesion is found, the DNA wraps around the other UvrB subunit that will check the other stand for damage (By similarity).</text>
</comment>
<comment type="subunit">
    <text evidence="1">Forms a heterotetramer with UvrA during the search for lesions. Interacts with UvrC in an incision complex (By similarity).</text>
</comment>
<comment type="subcellular location">
    <subcellularLocation>
        <location>Cytoplasm</location>
    </subcellularLocation>
</comment>
<comment type="domain">
    <text evidence="1">The beta-hairpin motif is involved in DNA binding.</text>
</comment>
<comment type="miscellaneous">
    <text>The ATPase activity is stimulated by single-stranded DNA. UvrB is stable up to 80 Celsius degrees.</text>
</comment>
<comment type="similarity">
    <text evidence="3">Belongs to the UvrB family.</text>
</comment>
<keyword id="KW-0002">3D-structure</keyword>
<keyword id="KW-0067">ATP-binding</keyword>
<keyword id="KW-0963">Cytoplasm</keyword>
<keyword id="KW-0903">Direct protein sequencing</keyword>
<keyword id="KW-0227">DNA damage</keyword>
<keyword id="KW-0228">DNA excision</keyword>
<keyword id="KW-0234">DNA repair</keyword>
<keyword id="KW-0267">Excision nuclease</keyword>
<keyword id="KW-0547">Nucleotide-binding</keyword>
<keyword id="KW-1185">Reference proteome</keyword>
<keyword id="KW-0742">SOS response</keyword>